<proteinExistence type="inferred from homology"/>
<comment type="catalytic activity">
    <reaction evidence="1">
        <text>S-adenosyl-L-methionine + a thiopurine = S-adenosyl-L-homocysteine + a thiopurine S-methylether.</text>
        <dbReference type="EC" id="2.1.1.67"/>
    </reaction>
</comment>
<comment type="subcellular location">
    <subcellularLocation>
        <location evidence="1">Cytoplasm</location>
    </subcellularLocation>
</comment>
<comment type="similarity">
    <text evidence="1">Belongs to the class I-like SAM-binding methyltransferase superfamily. TPMT family.</text>
</comment>
<sequence length="218" mass="24831">MEPGFWHEKWHQQQIGFHQQDINPFLVKYWQKLGLPADTQVFVPLCGKSLDMCFLAEQGHQVIGCELNELAVQQFFSDNQLEMTQTTVGEHQHYHTEQISLYQGDIFTLPKTITQAVTAFYDRAALIAWPESMRAQYAKQLASLLPSGSVGLLVTLDYPQEALIGPPFAVSPTWVEQHLSDDFDIEVLASQDVLADNPRFIKKAVPWLNEAAYLLKRK</sequence>
<reference key="1">
    <citation type="submission" date="2008-12" db="EMBL/GenBank/DDBJ databases">
        <title>Complete sequence of chromosome of Shewanella baltica OS223.</title>
        <authorList>
            <consortium name="US DOE Joint Genome Institute"/>
            <person name="Lucas S."/>
            <person name="Copeland A."/>
            <person name="Lapidus A."/>
            <person name="Glavina del Rio T."/>
            <person name="Dalin E."/>
            <person name="Tice H."/>
            <person name="Bruce D."/>
            <person name="Goodwin L."/>
            <person name="Pitluck S."/>
            <person name="Chertkov O."/>
            <person name="Meincke L."/>
            <person name="Brettin T."/>
            <person name="Detter J.C."/>
            <person name="Han C."/>
            <person name="Kuske C.R."/>
            <person name="Larimer F."/>
            <person name="Land M."/>
            <person name="Hauser L."/>
            <person name="Kyrpides N."/>
            <person name="Ovchinnikova G."/>
            <person name="Brettar I."/>
            <person name="Rodrigues J."/>
            <person name="Konstantinidis K."/>
            <person name="Tiedje J."/>
        </authorList>
    </citation>
    <scope>NUCLEOTIDE SEQUENCE [LARGE SCALE GENOMIC DNA]</scope>
    <source>
        <strain>OS223</strain>
    </source>
</reference>
<feature type="chain" id="PRO_1000148590" description="Thiopurine S-methyltransferase">
    <location>
        <begin position="1"/>
        <end position="218"/>
    </location>
</feature>
<feature type="binding site" evidence="1">
    <location>
        <position position="10"/>
    </location>
    <ligand>
        <name>S-adenosyl-L-methionine</name>
        <dbReference type="ChEBI" id="CHEBI:59789"/>
    </ligand>
</feature>
<feature type="binding site" evidence="1">
    <location>
        <position position="45"/>
    </location>
    <ligand>
        <name>S-adenosyl-L-methionine</name>
        <dbReference type="ChEBI" id="CHEBI:59789"/>
    </ligand>
</feature>
<feature type="binding site" evidence="1">
    <location>
        <position position="66"/>
    </location>
    <ligand>
        <name>S-adenosyl-L-methionine</name>
        <dbReference type="ChEBI" id="CHEBI:59789"/>
    </ligand>
</feature>
<feature type="binding site" evidence="1">
    <location>
        <position position="123"/>
    </location>
    <ligand>
        <name>S-adenosyl-L-methionine</name>
        <dbReference type="ChEBI" id="CHEBI:59789"/>
    </ligand>
</feature>
<dbReference type="EC" id="2.1.1.67" evidence="1"/>
<dbReference type="EMBL" id="CP001252">
    <property type="protein sequence ID" value="ACK48205.1"/>
    <property type="molecule type" value="Genomic_DNA"/>
</dbReference>
<dbReference type="RefSeq" id="WP_012588628.1">
    <property type="nucleotide sequence ID" value="NC_011663.1"/>
</dbReference>
<dbReference type="SMR" id="B8ECC0"/>
<dbReference type="KEGG" id="sbp:Sbal223_3727"/>
<dbReference type="HOGENOM" id="CLU_085515_1_0_6"/>
<dbReference type="Proteomes" id="UP000002507">
    <property type="component" value="Chromosome"/>
</dbReference>
<dbReference type="GO" id="GO:0005737">
    <property type="term" value="C:cytoplasm"/>
    <property type="evidence" value="ECO:0007669"/>
    <property type="project" value="UniProtKB-SubCell"/>
</dbReference>
<dbReference type="GO" id="GO:0008119">
    <property type="term" value="F:thiopurine S-methyltransferase activity"/>
    <property type="evidence" value="ECO:0007669"/>
    <property type="project" value="UniProtKB-UniRule"/>
</dbReference>
<dbReference type="GO" id="GO:0032259">
    <property type="term" value="P:methylation"/>
    <property type="evidence" value="ECO:0007669"/>
    <property type="project" value="UniProtKB-KW"/>
</dbReference>
<dbReference type="GO" id="GO:0010038">
    <property type="term" value="P:response to metal ion"/>
    <property type="evidence" value="ECO:0007669"/>
    <property type="project" value="InterPro"/>
</dbReference>
<dbReference type="FunFam" id="3.40.50.150:FF:000101">
    <property type="entry name" value="Thiopurine S-methyltransferase"/>
    <property type="match status" value="1"/>
</dbReference>
<dbReference type="Gene3D" id="3.40.50.150">
    <property type="entry name" value="Vaccinia Virus protein VP39"/>
    <property type="match status" value="1"/>
</dbReference>
<dbReference type="HAMAP" id="MF_00812">
    <property type="entry name" value="Thiopur_methtran"/>
    <property type="match status" value="1"/>
</dbReference>
<dbReference type="InterPro" id="IPR029063">
    <property type="entry name" value="SAM-dependent_MTases_sf"/>
</dbReference>
<dbReference type="InterPro" id="IPR022474">
    <property type="entry name" value="Thiopur_S-MeTfrase_Se/Te_detox"/>
</dbReference>
<dbReference type="InterPro" id="IPR025835">
    <property type="entry name" value="Thiopurine_S-MeTrfase"/>
</dbReference>
<dbReference type="InterPro" id="IPR008854">
    <property type="entry name" value="TPMT"/>
</dbReference>
<dbReference type="NCBIfam" id="NF009732">
    <property type="entry name" value="PRK13255.1"/>
    <property type="match status" value="1"/>
</dbReference>
<dbReference type="NCBIfam" id="TIGR03840">
    <property type="entry name" value="TMPT_Se_Te"/>
    <property type="match status" value="1"/>
</dbReference>
<dbReference type="PANTHER" id="PTHR10259">
    <property type="entry name" value="THIOPURINE S-METHYLTRANSFERASE"/>
    <property type="match status" value="1"/>
</dbReference>
<dbReference type="PANTHER" id="PTHR10259:SF11">
    <property type="entry name" value="THIOPURINE S-METHYLTRANSFERASE"/>
    <property type="match status" value="1"/>
</dbReference>
<dbReference type="Pfam" id="PF05724">
    <property type="entry name" value="TPMT"/>
    <property type="match status" value="1"/>
</dbReference>
<dbReference type="PIRSF" id="PIRSF023956">
    <property type="entry name" value="Thiopurine_S-methyltransferase"/>
    <property type="match status" value="1"/>
</dbReference>
<dbReference type="SUPFAM" id="SSF53335">
    <property type="entry name" value="S-adenosyl-L-methionine-dependent methyltransferases"/>
    <property type="match status" value="1"/>
</dbReference>
<dbReference type="PROSITE" id="PS51585">
    <property type="entry name" value="SAM_MT_TPMT"/>
    <property type="match status" value="1"/>
</dbReference>
<gene>
    <name evidence="1" type="primary">tpm</name>
    <name type="ordered locus">Sbal223_3727</name>
</gene>
<name>TPMT_SHEB2</name>
<keyword id="KW-0963">Cytoplasm</keyword>
<keyword id="KW-0489">Methyltransferase</keyword>
<keyword id="KW-0949">S-adenosyl-L-methionine</keyword>
<keyword id="KW-0808">Transferase</keyword>
<accession>B8ECC0</accession>
<protein>
    <recommendedName>
        <fullName evidence="1">Thiopurine S-methyltransferase</fullName>
        <ecNumber evidence="1">2.1.1.67</ecNumber>
    </recommendedName>
    <alternativeName>
        <fullName evidence="1">Thiopurine methyltransferase</fullName>
    </alternativeName>
</protein>
<evidence type="ECO:0000255" key="1">
    <source>
        <dbReference type="HAMAP-Rule" id="MF_00812"/>
    </source>
</evidence>
<organism>
    <name type="scientific">Shewanella baltica (strain OS223)</name>
    <dbReference type="NCBI Taxonomy" id="407976"/>
    <lineage>
        <taxon>Bacteria</taxon>
        <taxon>Pseudomonadati</taxon>
        <taxon>Pseudomonadota</taxon>
        <taxon>Gammaproteobacteria</taxon>
        <taxon>Alteromonadales</taxon>
        <taxon>Shewanellaceae</taxon>
        <taxon>Shewanella</taxon>
    </lineage>
</organism>